<organism>
    <name type="scientific">Mus musculus</name>
    <name type="common">Mouse</name>
    <dbReference type="NCBI Taxonomy" id="10090"/>
    <lineage>
        <taxon>Eukaryota</taxon>
        <taxon>Metazoa</taxon>
        <taxon>Chordata</taxon>
        <taxon>Craniata</taxon>
        <taxon>Vertebrata</taxon>
        <taxon>Euteleostomi</taxon>
        <taxon>Mammalia</taxon>
        <taxon>Eutheria</taxon>
        <taxon>Euarchontoglires</taxon>
        <taxon>Glires</taxon>
        <taxon>Rodentia</taxon>
        <taxon>Myomorpha</taxon>
        <taxon>Muroidea</taxon>
        <taxon>Muridae</taxon>
        <taxon>Murinae</taxon>
        <taxon>Mus</taxon>
        <taxon>Mus</taxon>
    </lineage>
</organism>
<feature type="chain" id="PRO_0000183979" description="Synaptotagmin-14">
    <location>
        <begin position="1"/>
        <end position="555"/>
    </location>
</feature>
<feature type="topological domain" description="Extracellular" evidence="2">
    <location>
        <begin position="1"/>
        <end position="24"/>
    </location>
</feature>
<feature type="transmembrane region" description="Helical; Signal-anchor for type III membrane protein" evidence="2">
    <location>
        <begin position="25"/>
        <end position="47"/>
    </location>
</feature>
<feature type="topological domain" description="Cytoplasmic" evidence="2">
    <location>
        <begin position="48"/>
        <end position="555"/>
    </location>
</feature>
<feature type="domain" description="C2 1" evidence="3">
    <location>
        <begin position="260"/>
        <end position="379"/>
    </location>
</feature>
<feature type="domain" description="C2 2" evidence="3">
    <location>
        <begin position="415"/>
        <end position="550"/>
    </location>
</feature>
<feature type="region of interest" description="Disordered" evidence="4">
    <location>
        <begin position="76"/>
        <end position="97"/>
    </location>
</feature>
<feature type="region of interest" description="Disordered" evidence="4">
    <location>
        <begin position="157"/>
        <end position="179"/>
    </location>
</feature>
<feature type="region of interest" description="Disordered" evidence="4">
    <location>
        <begin position="205"/>
        <end position="258"/>
    </location>
</feature>
<feature type="compositionally biased region" description="Basic and acidic residues" evidence="4">
    <location>
        <begin position="211"/>
        <end position="224"/>
    </location>
</feature>
<protein>
    <recommendedName>
        <fullName>Synaptotagmin-14</fullName>
    </recommendedName>
    <alternativeName>
        <fullName>Synaptotagmin XIV</fullName>
        <shortName>SytXIV</shortName>
    </alternativeName>
</protein>
<comment type="function">
    <text>May be involved in the trafficking and exocytosis of secretory vesicles in non-neuronal tissues. Is Ca(2+)-independent.</text>
</comment>
<comment type="subunit">
    <text evidence="1">Homodimer. Can also form heterodimers (By similarity).</text>
</comment>
<comment type="subcellular location">
    <subcellularLocation>
        <location evidence="7">Membrane</location>
        <topology evidence="7">Single-pass type III membrane protein</topology>
    </subcellularLocation>
</comment>
<comment type="tissue specificity">
    <text evidence="5 6">Expressed in heart and testis. Expressed in brain (especially in the cerebellum).</text>
</comment>
<comment type="similarity">
    <text evidence="7">Belongs to the synaptotagmin family.</text>
</comment>
<proteinExistence type="evidence at transcript level"/>
<gene>
    <name type="primary">Syt14</name>
</gene>
<reference key="1">
    <citation type="journal article" date="2003" name="J. Biochem.">
        <title>Molecular cloning, expression, and characterization of a novel class of synaptotagmin (Syt XIV) conserved from Drosophila to humans.</title>
        <authorList>
            <person name="Fukuda M."/>
        </authorList>
    </citation>
    <scope>NUCLEOTIDE SEQUENCE [MRNA]</scope>
    <scope>TISSUE SPECIFICITY</scope>
    <source>
        <strain>BALB/cJ</strain>
    </source>
</reference>
<reference key="2">
    <citation type="journal article" date="2011" name="Am. J. Hum. Genet.">
        <title>Exome sequencing reveals a homozygous SYT14 mutation in adult-onset, autosomal-recessive spinocerebellar ataxia with psychomotor retardation.</title>
        <authorList>
            <person name="Doi H."/>
            <person name="Yoshida K."/>
            <person name="Yasuda T."/>
            <person name="Fukuda M."/>
            <person name="Fukuda Y."/>
            <person name="Morita H."/>
            <person name="Ikeda S."/>
            <person name="Kato R."/>
            <person name="Tsurusaki Y."/>
            <person name="Miyake N."/>
            <person name="Saitsu H."/>
            <person name="Sakai H."/>
            <person name="Miyatake S."/>
            <person name="Shiina M."/>
            <person name="Nukina N."/>
            <person name="Koyano S."/>
            <person name="Tsuji S."/>
            <person name="Kuroiwa Y."/>
            <person name="Matsumoto N."/>
        </authorList>
    </citation>
    <scope>TISSUE SPECIFICITY</scope>
</reference>
<accession>Q7TN84</accession>
<dbReference type="EMBL" id="AB102947">
    <property type="protein sequence ID" value="BAC76808.1"/>
    <property type="molecule type" value="mRNA"/>
</dbReference>
<dbReference type="CCDS" id="CCDS48489.1"/>
<dbReference type="RefSeq" id="NP_853524.1">
    <property type="nucleotide sequence ID" value="NM_181546.3"/>
</dbReference>
<dbReference type="SMR" id="Q7TN84"/>
<dbReference type="FunCoup" id="Q7TN84">
    <property type="interactions" value="453"/>
</dbReference>
<dbReference type="STRING" id="10090.ENSMUSP00000016344"/>
<dbReference type="iPTMnet" id="Q7TN84"/>
<dbReference type="PhosphoSitePlus" id="Q7TN84"/>
<dbReference type="PaxDb" id="10090-ENSMUSP00000016344"/>
<dbReference type="ProteomicsDB" id="254791"/>
<dbReference type="Antibodypedia" id="51697">
    <property type="antibodies" value="30 antibodies from 14 providers"/>
</dbReference>
<dbReference type="DNASU" id="329324"/>
<dbReference type="Ensembl" id="ENSMUST00000195354.6">
    <property type="protein sequence ID" value="ENSMUSP00000142190.2"/>
    <property type="gene ID" value="ENSMUSG00000016200.15"/>
</dbReference>
<dbReference type="GeneID" id="329324"/>
<dbReference type="KEGG" id="mmu:329324"/>
<dbReference type="UCSC" id="uc007edu.2">
    <property type="organism name" value="mouse"/>
</dbReference>
<dbReference type="AGR" id="MGI:2444490"/>
<dbReference type="CTD" id="255928"/>
<dbReference type="MGI" id="MGI:2444490">
    <property type="gene designation" value="Syt14"/>
</dbReference>
<dbReference type="VEuPathDB" id="HostDB:ENSMUSG00000016200"/>
<dbReference type="eggNOG" id="KOG1028">
    <property type="taxonomic scope" value="Eukaryota"/>
</dbReference>
<dbReference type="GeneTree" id="ENSGT00940000159420"/>
<dbReference type="InParanoid" id="Q7TN84"/>
<dbReference type="OrthoDB" id="5978493at2759"/>
<dbReference type="PhylomeDB" id="Q7TN84"/>
<dbReference type="TreeFam" id="TF351132"/>
<dbReference type="BioGRID-ORCS" id="329324">
    <property type="hits" value="1 hit in 80 CRISPR screens"/>
</dbReference>
<dbReference type="PRO" id="PR:Q7TN84"/>
<dbReference type="Proteomes" id="UP000000589">
    <property type="component" value="Chromosome 1"/>
</dbReference>
<dbReference type="RNAct" id="Q7TN84">
    <property type="molecule type" value="protein"/>
</dbReference>
<dbReference type="Bgee" id="ENSMUSG00000016200">
    <property type="expression patterns" value="Expressed in otolith organ and 152 other cell types or tissues"/>
</dbReference>
<dbReference type="ExpressionAtlas" id="Q7TN84">
    <property type="expression patterns" value="baseline and differential"/>
</dbReference>
<dbReference type="GO" id="GO:0016020">
    <property type="term" value="C:membrane"/>
    <property type="evidence" value="ECO:0000250"/>
    <property type="project" value="MGI"/>
</dbReference>
<dbReference type="GO" id="GO:0042802">
    <property type="term" value="F:identical protein binding"/>
    <property type="evidence" value="ECO:0000353"/>
    <property type="project" value="MGI"/>
</dbReference>
<dbReference type="GO" id="GO:0005543">
    <property type="term" value="F:phospholipid binding"/>
    <property type="evidence" value="ECO:0000314"/>
    <property type="project" value="MGI"/>
</dbReference>
<dbReference type="CDD" id="cd08389">
    <property type="entry name" value="C2A_Synaptotagmin-14_16"/>
    <property type="match status" value="1"/>
</dbReference>
<dbReference type="CDD" id="cd08408">
    <property type="entry name" value="C2B_Synaptotagmin-14_16"/>
    <property type="match status" value="1"/>
</dbReference>
<dbReference type="FunFam" id="2.60.40.150:FF:000153">
    <property type="entry name" value="Synaptotagmin 16"/>
    <property type="match status" value="1"/>
</dbReference>
<dbReference type="FunFam" id="2.60.40.150:FF:000062">
    <property type="entry name" value="synaptotagmin-14 isoform X1"/>
    <property type="match status" value="1"/>
</dbReference>
<dbReference type="Gene3D" id="2.60.40.150">
    <property type="entry name" value="C2 domain"/>
    <property type="match status" value="2"/>
</dbReference>
<dbReference type="InterPro" id="IPR000008">
    <property type="entry name" value="C2_dom"/>
</dbReference>
<dbReference type="InterPro" id="IPR035892">
    <property type="entry name" value="C2_domain_sf"/>
</dbReference>
<dbReference type="InterPro" id="IPR043541">
    <property type="entry name" value="SYT14/14L/16"/>
</dbReference>
<dbReference type="PANTHER" id="PTHR46129">
    <property type="entry name" value="SYNAPTOTAGMIN 14, ISOFORM D"/>
    <property type="match status" value="1"/>
</dbReference>
<dbReference type="PANTHER" id="PTHR46129:SF3">
    <property type="entry name" value="SYNAPTOTAGMIN-14-RELATED"/>
    <property type="match status" value="1"/>
</dbReference>
<dbReference type="Pfam" id="PF00168">
    <property type="entry name" value="C2"/>
    <property type="match status" value="2"/>
</dbReference>
<dbReference type="SMART" id="SM00239">
    <property type="entry name" value="C2"/>
    <property type="match status" value="2"/>
</dbReference>
<dbReference type="SUPFAM" id="SSF49562">
    <property type="entry name" value="C2 domain (Calcium/lipid-binding domain, CaLB)"/>
    <property type="match status" value="2"/>
</dbReference>
<dbReference type="PROSITE" id="PS50004">
    <property type="entry name" value="C2"/>
    <property type="match status" value="2"/>
</dbReference>
<evidence type="ECO:0000250" key="1"/>
<evidence type="ECO:0000255" key="2"/>
<evidence type="ECO:0000255" key="3">
    <source>
        <dbReference type="PROSITE-ProRule" id="PRU00041"/>
    </source>
</evidence>
<evidence type="ECO:0000256" key="4">
    <source>
        <dbReference type="SAM" id="MobiDB-lite"/>
    </source>
</evidence>
<evidence type="ECO:0000269" key="5">
    <source>
    </source>
</evidence>
<evidence type="ECO:0000269" key="6">
    <source>
    </source>
</evidence>
<evidence type="ECO:0000305" key="7"/>
<sequence length="555" mass="62044">MAIEGGERTCGVHELICIRKVSPEAVGFLSAVGVFIVLMLLLFLYINKKFCFENVGGFPDLGSGYNTRTNSQDKMYNSYMDRDEPGSSSESEDEALGKYHEALSRTHNSRWPLVDSRQKSYAWETRQKYSPLSAEYDGYSTEASMEDGNCIQRMRRTPPLDELQPPPYQDDSGSPHLSCTPSEIGDAKCEISHCSNSPRCSFNKCPSEGSTGHEAESYHNKGYEDDVPSDSTAVLSPEDMSAQGSSSQLPKPFDPEPEAKYGTLDVTFDYDSERQKLLVTVTAVTDIPTYNRTGGNSWQVHLVLLPIKKQRAKTSIQRGPCPVFTETFKFNHVESEMIGNYAVRFRLYGVHRMKKEKIVGEKIFYLTKLNLQGKMSLPVILEPSYNPSGCDSQVSLSEASCGDSTSSCQSLQHGSVPEILIGLLYNATTGRLSAEVIKGSHFKNLAANRPPNTYVKLTLLNSMGQEMSKCKTSTRRGQPNPVYKETFVFQVALFQLSDVTLILSVYNRRSMKRKEMIGWISLGLNSSGEEELRHWTAMKESKGQQVCRWHALLES</sequence>
<keyword id="KW-0472">Membrane</keyword>
<keyword id="KW-1185">Reference proteome</keyword>
<keyword id="KW-0677">Repeat</keyword>
<keyword id="KW-0735">Signal-anchor</keyword>
<keyword id="KW-0812">Transmembrane</keyword>
<keyword id="KW-1133">Transmembrane helix</keyword>
<name>SYT14_MOUSE</name>